<organism>
    <name type="scientific">Chaetomium thermophilum (strain DSM 1495 / CBS 144.50 / IMI 039719)</name>
    <name type="common">Thermochaetoides thermophila</name>
    <dbReference type="NCBI Taxonomy" id="759272"/>
    <lineage>
        <taxon>Eukaryota</taxon>
        <taxon>Fungi</taxon>
        <taxon>Dikarya</taxon>
        <taxon>Ascomycota</taxon>
        <taxon>Pezizomycotina</taxon>
        <taxon>Sordariomycetes</taxon>
        <taxon>Sordariomycetidae</taxon>
        <taxon>Sordariales</taxon>
        <taxon>Chaetomiaceae</taxon>
        <taxon>Thermochaetoides</taxon>
    </lineage>
</organism>
<evidence type="ECO:0000250" key="1">
    <source>
        <dbReference type="UniProtKB" id="Q12164"/>
    </source>
</evidence>
<evidence type="ECO:0000255" key="2"/>
<evidence type="ECO:0000303" key="3">
    <source>
    </source>
</evidence>
<evidence type="ECO:0000305" key="4"/>
<evidence type="ECO:0000305" key="5">
    <source>
    </source>
</evidence>
<accession>G0S6T0</accession>
<accession>G0ZGV8</accession>
<protein>
    <recommendedName>
        <fullName evidence="3">Nucleoporin POM33</fullName>
    </recommendedName>
    <alternativeName>
        <fullName>Nuclear pore protein POM33</fullName>
    </alternativeName>
    <alternativeName>
        <fullName>Pore membrane protein of 33 kDa</fullName>
    </alternativeName>
</protein>
<comment type="function">
    <text evidence="1">Contributes to proper distribution and/or efficient assembly of nuclear pores.</text>
</comment>
<comment type="subunit">
    <text evidence="1 5">The nuclear pore complex (NPC) constitutes the exclusive means of nucleocytoplasmic transport. NPCs allow the passive diffusion of ions and small molecules and the active, nuclear transport receptor-mediated bidirectional transport of macromolecules such as proteins, RNAs, ribonucleoparticles (RNPs), and ribosomal subunits across the nuclear envelope. The 55-60 MDa NPC is composed of at least 28 different subunits: AMO1, ELYS, GLE1, GLE2, MLP1, NDC1, NIC96, NSP1, NUP133, NUP145, NUP152, NUP159, NUP170, NUP188, NUP192, NUP37, NUP49, NUP53, NUP56, NUP57, NUP82, NUP84, NUP85, POM152, POM33, POM34, SEC13 and SEH1. Due to its 8-fold rotational symmetry, all subunits are present with 8 copies or multiples thereof.</text>
</comment>
<comment type="subcellular location">
    <subcellularLocation>
        <location evidence="1">Nucleus membrane</location>
        <topology evidence="1">Multi-pass membrane protein</topology>
    </subcellularLocation>
    <subcellularLocation>
        <location evidence="1">Nucleus</location>
        <location evidence="1">Nuclear pore complex</location>
    </subcellularLocation>
</comment>
<comment type="similarity">
    <text evidence="4">Belongs to the PER33/POM33 family.</text>
</comment>
<reference key="1">
    <citation type="journal article" date="2011" name="Cell">
        <title>Insight into structure and assembly of the nuclear pore complex by utilizing the genome of a eukaryotic thermophile.</title>
        <authorList>
            <person name="Amlacher S."/>
            <person name="Sarges P."/>
            <person name="Flemming D."/>
            <person name="van Noort V."/>
            <person name="Kunze R."/>
            <person name="Devos D.P."/>
            <person name="Arumugam M."/>
            <person name="Bork P."/>
            <person name="Hurt E."/>
        </authorList>
    </citation>
    <scope>NUCLEOTIDE SEQUENCE [LARGE SCALE GENOMIC DNA]</scope>
    <source>
        <strain>DSM 1495 / CBS 144.50 / IMI 039719</strain>
    </source>
</reference>
<name>POM33_CHATD</name>
<dbReference type="EMBL" id="GL988041">
    <property type="protein sequence ID" value="EGS21682.1"/>
    <property type="molecule type" value="Genomic_DNA"/>
</dbReference>
<dbReference type="EMBL" id="JF276303">
    <property type="protein sequence ID" value="AEL00696.1"/>
    <property type="molecule type" value="Genomic_DNA"/>
</dbReference>
<dbReference type="RefSeq" id="XP_006693978.1">
    <property type="nucleotide sequence ID" value="XM_006693915.1"/>
</dbReference>
<dbReference type="STRING" id="759272.G0S6T0"/>
<dbReference type="TCDB" id="1.I.1.1.2">
    <property type="family name" value="the nuclear pore complex (npc) family"/>
</dbReference>
<dbReference type="GeneID" id="18257586"/>
<dbReference type="KEGG" id="cthr:CTHT_0035480"/>
<dbReference type="eggNOG" id="KOG4002">
    <property type="taxonomic scope" value="Eukaryota"/>
</dbReference>
<dbReference type="HOGENOM" id="CLU_065417_2_0_1"/>
<dbReference type="OMA" id="NVQYLIM"/>
<dbReference type="OrthoDB" id="5581259at2759"/>
<dbReference type="Proteomes" id="UP000008066">
    <property type="component" value="Unassembled WGS sequence"/>
</dbReference>
<dbReference type="GO" id="GO:0005783">
    <property type="term" value="C:endoplasmic reticulum"/>
    <property type="evidence" value="ECO:0007669"/>
    <property type="project" value="TreeGrafter"/>
</dbReference>
<dbReference type="GO" id="GO:0031965">
    <property type="term" value="C:nuclear membrane"/>
    <property type="evidence" value="ECO:0007669"/>
    <property type="project" value="UniProtKB-SubCell"/>
</dbReference>
<dbReference type="GO" id="GO:0005643">
    <property type="term" value="C:nuclear pore"/>
    <property type="evidence" value="ECO:0007669"/>
    <property type="project" value="UniProtKB-SubCell"/>
</dbReference>
<dbReference type="GO" id="GO:0071786">
    <property type="term" value="P:endoplasmic reticulum tubular network organization"/>
    <property type="evidence" value="ECO:0007669"/>
    <property type="project" value="TreeGrafter"/>
</dbReference>
<dbReference type="GO" id="GO:0061024">
    <property type="term" value="P:membrane organization"/>
    <property type="evidence" value="ECO:0007669"/>
    <property type="project" value="TreeGrafter"/>
</dbReference>
<dbReference type="GO" id="GO:0051028">
    <property type="term" value="P:mRNA transport"/>
    <property type="evidence" value="ECO:0007669"/>
    <property type="project" value="UniProtKB-KW"/>
</dbReference>
<dbReference type="GO" id="GO:0015031">
    <property type="term" value="P:protein transport"/>
    <property type="evidence" value="ECO:0007669"/>
    <property type="project" value="UniProtKB-KW"/>
</dbReference>
<dbReference type="InterPro" id="IPR051645">
    <property type="entry name" value="PER33/POM33_regulator"/>
</dbReference>
<dbReference type="InterPro" id="IPR005344">
    <property type="entry name" value="TMEM33/Pom33"/>
</dbReference>
<dbReference type="PANTHER" id="PTHR12703">
    <property type="entry name" value="TRANSMEMBRANE PROTEIN 33"/>
    <property type="match status" value="1"/>
</dbReference>
<dbReference type="PANTHER" id="PTHR12703:SF4">
    <property type="entry name" value="TRANSMEMBRANE PROTEIN 33"/>
    <property type="match status" value="1"/>
</dbReference>
<dbReference type="Pfam" id="PF03661">
    <property type="entry name" value="TMEM33_Pom33"/>
    <property type="match status" value="1"/>
</dbReference>
<proteinExistence type="inferred from homology"/>
<feature type="chain" id="PRO_0000433196" description="Nucleoporin POM33">
    <location>
        <begin position="1"/>
        <end position="287"/>
    </location>
</feature>
<feature type="topological domain" description="Cytoplasmic" evidence="1">
    <location>
        <begin position="1"/>
        <end position="18"/>
    </location>
</feature>
<feature type="transmembrane region" description="Helical" evidence="2">
    <location>
        <begin position="19"/>
        <end position="39"/>
    </location>
</feature>
<feature type="topological domain" description="Perinuclear space" evidence="1">
    <location>
        <begin position="40"/>
        <end position="53"/>
    </location>
</feature>
<feature type="transmembrane region" description="Helical" evidence="2">
    <location>
        <begin position="54"/>
        <end position="74"/>
    </location>
</feature>
<feature type="topological domain" description="Cytoplasmic" evidence="1">
    <location>
        <begin position="75"/>
        <end position="103"/>
    </location>
</feature>
<feature type="transmembrane region" description="Helical" evidence="2">
    <location>
        <begin position="104"/>
        <end position="124"/>
    </location>
</feature>
<feature type="topological domain" description="Perinuclear space" evidence="1">
    <location>
        <begin position="125"/>
        <end position="183"/>
    </location>
</feature>
<feature type="transmembrane region" description="Helical" evidence="2">
    <location>
        <begin position="184"/>
        <end position="204"/>
    </location>
</feature>
<feature type="topological domain" description="Cytoplasmic" evidence="1">
    <location>
        <begin position="205"/>
        <end position="287"/>
    </location>
</feature>
<gene>
    <name type="primary">POM33</name>
    <name type="ORF">CTHT_0035480</name>
</gene>
<sequence length="287" mass="32671">MAPPPPSADVPLAERLQRLASTLQFAWFSGHALLLLCVFRYAFSWIRFNYYSGMARFCYRFAFIAAAATYGIVVYKTWRARQKTGVKTSGIKDYLRDENIQYLVLALVWLFMPQYPLALLPYGIYSVFHVATYVRANLIPTLVPPQRINAPAGASPNAKPQYTQHPASEAIGVFVKKYYDSSMSMVARLEIMLWLRLILSVILFQRRSWILFAIYTTFLRTRFSQSIHVQNAFALLEARIDNLIGAQGTPPQARQVWDNVKTAARQFYAVTDLNKYESGVAAPKKSS</sequence>
<keyword id="KW-0472">Membrane</keyword>
<keyword id="KW-0509">mRNA transport</keyword>
<keyword id="KW-0906">Nuclear pore complex</keyword>
<keyword id="KW-0539">Nucleus</keyword>
<keyword id="KW-0653">Protein transport</keyword>
<keyword id="KW-1185">Reference proteome</keyword>
<keyword id="KW-0811">Translocation</keyword>
<keyword id="KW-0812">Transmembrane</keyword>
<keyword id="KW-1133">Transmembrane helix</keyword>
<keyword id="KW-0813">Transport</keyword>